<feature type="signal peptide">
    <location>
        <begin position="1"/>
        <end position="19"/>
    </location>
</feature>
<feature type="chain" id="PRO_0000015212" description="Ig heavy chain V region 3">
    <location>
        <begin position="20"/>
        <end position="117"/>
    </location>
</feature>
<feature type="region of interest" description="Framework-1">
    <location>
        <begin position="20"/>
        <end position="49"/>
    </location>
</feature>
<feature type="region of interest" description="Complementarity-determining-1">
    <location>
        <begin position="50"/>
        <end position="54"/>
    </location>
</feature>
<feature type="region of interest" description="Framework-2">
    <location>
        <begin position="55"/>
        <end position="68"/>
    </location>
</feature>
<feature type="region of interest" description="Complementarity-determining-2">
    <location>
        <begin position="69"/>
        <end position="85"/>
    </location>
</feature>
<feature type="region of interest" description="Framework-3">
    <location>
        <begin position="86"/>
        <end position="117"/>
    </location>
</feature>
<feature type="disulfide bond" evidence="1">
    <location>
        <begin position="41"/>
        <end position="115"/>
    </location>
</feature>
<feature type="non-terminal residue">
    <location>
        <position position="117"/>
    </location>
</feature>
<dbReference type="EMBL" id="J03616">
    <property type="protein sequence ID" value="AAA50807.1"/>
    <property type="molecule type" value="Genomic_DNA"/>
</dbReference>
<dbReference type="PIR" id="A28966">
    <property type="entry name" value="A28966"/>
</dbReference>
<dbReference type="SMR" id="P19180"/>
<dbReference type="Proteomes" id="UP000515129">
    <property type="component" value="Unplaced"/>
</dbReference>
<dbReference type="GO" id="GO:0005576">
    <property type="term" value="C:extracellular region"/>
    <property type="evidence" value="ECO:0007669"/>
    <property type="project" value="UniProtKB-ARBA"/>
</dbReference>
<dbReference type="GO" id="GO:0019814">
    <property type="term" value="C:immunoglobulin complex"/>
    <property type="evidence" value="ECO:0007669"/>
    <property type="project" value="UniProtKB-KW"/>
</dbReference>
<dbReference type="GO" id="GO:0002250">
    <property type="term" value="P:adaptive immune response"/>
    <property type="evidence" value="ECO:0007669"/>
    <property type="project" value="UniProtKB-KW"/>
</dbReference>
<dbReference type="CDD" id="cd04981">
    <property type="entry name" value="IgV_H"/>
    <property type="match status" value="1"/>
</dbReference>
<dbReference type="FunFam" id="2.60.40.10:FF:002198">
    <property type="entry name" value="Immunoglobulin heavy variable 5-2"/>
    <property type="match status" value="1"/>
</dbReference>
<dbReference type="Gene3D" id="2.60.40.10">
    <property type="entry name" value="Immunoglobulins"/>
    <property type="match status" value="1"/>
</dbReference>
<dbReference type="InterPro" id="IPR007110">
    <property type="entry name" value="Ig-like_dom"/>
</dbReference>
<dbReference type="InterPro" id="IPR036179">
    <property type="entry name" value="Ig-like_dom_sf"/>
</dbReference>
<dbReference type="InterPro" id="IPR013783">
    <property type="entry name" value="Ig-like_fold"/>
</dbReference>
<dbReference type="InterPro" id="IPR013106">
    <property type="entry name" value="Ig_V-set"/>
</dbReference>
<dbReference type="InterPro" id="IPR050199">
    <property type="entry name" value="IgHV"/>
</dbReference>
<dbReference type="PANTHER" id="PTHR23266">
    <property type="entry name" value="IMMUNOGLOBULIN HEAVY CHAIN"/>
    <property type="match status" value="1"/>
</dbReference>
<dbReference type="Pfam" id="PF07686">
    <property type="entry name" value="V-set"/>
    <property type="match status" value="1"/>
</dbReference>
<dbReference type="SMART" id="SM00406">
    <property type="entry name" value="IGv"/>
    <property type="match status" value="1"/>
</dbReference>
<dbReference type="SUPFAM" id="SSF48726">
    <property type="entry name" value="Immunoglobulin"/>
    <property type="match status" value="1"/>
</dbReference>
<dbReference type="PROSITE" id="PS50835">
    <property type="entry name" value="IG_LIKE"/>
    <property type="match status" value="1"/>
</dbReference>
<accession>P19180</accession>
<name>HV03_CARAU</name>
<sequence length="117" mass="13220">MRLWLHLVLLVATLEGVRSQVQLVESGGDVKKPGDSLRLSCKASGYTFSGYTMYWVRQAPGKGLEWVSRIYDDGSDVSYADTVKGRFTISRDNAKNLLYLQMSNLKPEDTGRYYCAR</sequence>
<organism>
    <name type="scientific">Carassius auratus</name>
    <name type="common">Goldfish</name>
    <dbReference type="NCBI Taxonomy" id="7957"/>
    <lineage>
        <taxon>Eukaryota</taxon>
        <taxon>Metazoa</taxon>
        <taxon>Chordata</taxon>
        <taxon>Craniata</taxon>
        <taxon>Vertebrata</taxon>
        <taxon>Euteleostomi</taxon>
        <taxon>Actinopterygii</taxon>
        <taxon>Neopterygii</taxon>
        <taxon>Teleostei</taxon>
        <taxon>Ostariophysi</taxon>
        <taxon>Cypriniformes</taxon>
        <taxon>Cyprinidae</taxon>
        <taxon>Cyprininae</taxon>
        <taxon>Carassius</taxon>
    </lineage>
</organism>
<reference key="1">
    <citation type="journal article" date="1988" name="Proc. Natl. Acad. Sci. U.S.A.">
        <title>Immunoglobulin heavy chain variable region gene evolution: structure and family relationships of two genes and a pseudogene in a teleost fish.</title>
        <authorList>
            <person name="Wilson M.R."/>
            <person name="Middleton D."/>
            <person name="Warr G.W."/>
        </authorList>
    </citation>
    <scope>NUCLEOTIDE SEQUENCE [GENOMIC DNA]</scope>
</reference>
<proteinExistence type="predicted"/>
<keyword id="KW-1064">Adaptive immunity</keyword>
<keyword id="KW-1015">Disulfide bond</keyword>
<keyword id="KW-0391">Immunity</keyword>
<keyword id="KW-1280">Immunoglobulin</keyword>
<keyword id="KW-1185">Reference proteome</keyword>
<keyword id="KW-0732">Signal</keyword>
<protein>
    <recommendedName>
        <fullName>Ig heavy chain V region 3</fullName>
    </recommendedName>
</protein>
<evidence type="ECO:0000255" key="1">
    <source>
        <dbReference type="PROSITE-ProRule" id="PRU00114"/>
    </source>
</evidence>